<feature type="chain" id="PRO_0000181662" description="tRNA(Ile)-lysidine synthase">
    <location>
        <begin position="1"/>
        <end position="448"/>
    </location>
</feature>
<feature type="binding site" evidence="1">
    <location>
        <begin position="25"/>
        <end position="30"/>
    </location>
    <ligand>
        <name>ATP</name>
        <dbReference type="ChEBI" id="CHEBI:30616"/>
    </ligand>
</feature>
<proteinExistence type="inferred from homology"/>
<organism>
    <name type="scientific">Brucella melitensis biotype 1 (strain ATCC 23456 / CCUG 17765 / NCTC 10094 / 16M)</name>
    <dbReference type="NCBI Taxonomy" id="224914"/>
    <lineage>
        <taxon>Bacteria</taxon>
        <taxon>Pseudomonadati</taxon>
        <taxon>Pseudomonadota</taxon>
        <taxon>Alphaproteobacteria</taxon>
        <taxon>Hyphomicrobiales</taxon>
        <taxon>Brucellaceae</taxon>
        <taxon>Brucella/Ochrobactrum group</taxon>
        <taxon>Brucella</taxon>
    </lineage>
</organism>
<comment type="function">
    <text evidence="1">Ligates lysine onto the cytidine present at position 34 of the AUA codon-specific tRNA(Ile) that contains the anticodon CAU, in an ATP-dependent manner. Cytidine is converted to lysidine, thus changing the amino acid specificity of the tRNA from methionine to isoleucine.</text>
</comment>
<comment type="catalytic activity">
    <reaction evidence="1">
        <text>cytidine(34) in tRNA(Ile2) + L-lysine + ATP = lysidine(34) in tRNA(Ile2) + AMP + diphosphate + H(+)</text>
        <dbReference type="Rhea" id="RHEA:43744"/>
        <dbReference type="Rhea" id="RHEA-COMP:10625"/>
        <dbReference type="Rhea" id="RHEA-COMP:10670"/>
        <dbReference type="ChEBI" id="CHEBI:15378"/>
        <dbReference type="ChEBI" id="CHEBI:30616"/>
        <dbReference type="ChEBI" id="CHEBI:32551"/>
        <dbReference type="ChEBI" id="CHEBI:33019"/>
        <dbReference type="ChEBI" id="CHEBI:82748"/>
        <dbReference type="ChEBI" id="CHEBI:83665"/>
        <dbReference type="ChEBI" id="CHEBI:456215"/>
        <dbReference type="EC" id="6.3.4.19"/>
    </reaction>
</comment>
<comment type="subcellular location">
    <subcellularLocation>
        <location evidence="1">Cytoplasm</location>
    </subcellularLocation>
</comment>
<comment type="domain">
    <text>The N-terminal region contains the highly conserved SGGXDS motif, predicted to be a P-loop motif involved in ATP binding.</text>
</comment>
<comment type="similarity">
    <text evidence="1">Belongs to the tRNA(Ile)-lysidine synthase family.</text>
</comment>
<comment type="sequence caution" evidence="2">
    <conflict type="erroneous initiation">
        <sequence resource="EMBL-CDS" id="AAL51523"/>
    </conflict>
</comment>
<keyword id="KW-0067">ATP-binding</keyword>
<keyword id="KW-0963">Cytoplasm</keyword>
<keyword id="KW-0436">Ligase</keyword>
<keyword id="KW-0547">Nucleotide-binding</keyword>
<keyword id="KW-0819">tRNA processing</keyword>
<gene>
    <name evidence="1" type="primary">tilS</name>
    <name type="ordered locus">BMEI0342</name>
</gene>
<name>TILS_BRUME</name>
<evidence type="ECO:0000255" key="1">
    <source>
        <dbReference type="HAMAP-Rule" id="MF_01161"/>
    </source>
</evidence>
<evidence type="ECO:0000305" key="2"/>
<sequence length="448" mass="48605">MGLSPVNIFKPFGLGRAKAVIAAVSGGSDSLGLLFLLKDYLSTLESPPVLIAVTVDHKLRAESALEAENVGLLCQKHGIMHCVLSWDDPKPAHGLAAAARTARYRLLVQAARDAGAGFIVTGHTENDQIETFLMRKARSGHCEARGLAAMSPRSLLEGSVELARPLLTVSRQALRDELTRRGIAWVDDPSNANIDYERPRVRLGVAAEADGQEVLEQIAQAGAARERNNAALVEALADPATLGVDAAGMMFLNADCYAALSPGARQLFSGLLASIAGGRRFLPGDGERRRIERMLSGQDAPRRLTVFGALIERGEKGAPHRFRRERRNLPKLDLVPGQHIVWDGRFCFFNSGGRSFEIAPPGRQELIDFLKNSGRDIESRRCEALLISPALYEGGKLAFVPFLPGAEWPQGVHIERHFAIFDHVLPGHDFALAQAVEARLGRACAEIS</sequence>
<reference key="1">
    <citation type="journal article" date="2002" name="Proc. Natl. Acad. Sci. U.S.A.">
        <title>The genome sequence of the facultative intracellular pathogen Brucella melitensis.</title>
        <authorList>
            <person name="DelVecchio V.G."/>
            <person name="Kapatral V."/>
            <person name="Redkar R.J."/>
            <person name="Patra G."/>
            <person name="Mujer C."/>
            <person name="Los T."/>
            <person name="Ivanova N."/>
            <person name="Anderson I."/>
            <person name="Bhattacharyya A."/>
            <person name="Lykidis A."/>
            <person name="Reznik G."/>
            <person name="Jablonski L."/>
            <person name="Larsen N."/>
            <person name="D'Souza M."/>
            <person name="Bernal A."/>
            <person name="Mazur M."/>
            <person name="Goltsman E."/>
            <person name="Selkov E."/>
            <person name="Elzer P.H."/>
            <person name="Hagius S."/>
            <person name="O'Callaghan D."/>
            <person name="Letesson J.-J."/>
            <person name="Haselkorn R."/>
            <person name="Kyrpides N.C."/>
            <person name="Overbeek R."/>
        </authorList>
    </citation>
    <scope>NUCLEOTIDE SEQUENCE [LARGE SCALE GENOMIC DNA]</scope>
    <source>
        <strain>ATCC 23456 / CCUG 17765 / NCTC 10094 / 16M</strain>
    </source>
</reference>
<protein>
    <recommendedName>
        <fullName evidence="1">tRNA(Ile)-lysidine synthase</fullName>
        <ecNumber evidence="1">6.3.4.19</ecNumber>
    </recommendedName>
    <alternativeName>
        <fullName evidence="1">tRNA(Ile)-2-lysyl-cytidine synthase</fullName>
    </alternativeName>
    <alternativeName>
        <fullName evidence="1">tRNA(Ile)-lysidine synthetase</fullName>
    </alternativeName>
</protein>
<dbReference type="EC" id="6.3.4.19" evidence="1"/>
<dbReference type="EMBL" id="AE008917">
    <property type="protein sequence ID" value="AAL51523.1"/>
    <property type="status" value="ALT_INIT"/>
    <property type="molecule type" value="Genomic_DNA"/>
</dbReference>
<dbReference type="PIR" id="AH3294">
    <property type="entry name" value="AH3294"/>
</dbReference>
<dbReference type="RefSeq" id="WP_004686307.1">
    <property type="nucleotide sequence ID" value="NZ_GG703781.1"/>
</dbReference>
<dbReference type="SMR" id="Q8YIV0"/>
<dbReference type="GeneID" id="29593097"/>
<dbReference type="KEGG" id="bme:BMEI0342"/>
<dbReference type="KEGG" id="bmel:DK63_1091"/>
<dbReference type="PATRIC" id="fig|224914.52.peg.1149"/>
<dbReference type="eggNOG" id="COG0037">
    <property type="taxonomic scope" value="Bacteria"/>
</dbReference>
<dbReference type="PhylomeDB" id="Q8YIV0"/>
<dbReference type="Proteomes" id="UP000000419">
    <property type="component" value="Chromosome I"/>
</dbReference>
<dbReference type="GO" id="GO:0005737">
    <property type="term" value="C:cytoplasm"/>
    <property type="evidence" value="ECO:0007669"/>
    <property type="project" value="UniProtKB-SubCell"/>
</dbReference>
<dbReference type="GO" id="GO:0005524">
    <property type="term" value="F:ATP binding"/>
    <property type="evidence" value="ECO:0007669"/>
    <property type="project" value="UniProtKB-UniRule"/>
</dbReference>
<dbReference type="GO" id="GO:0032267">
    <property type="term" value="F:tRNA(Ile)-lysidine synthase activity"/>
    <property type="evidence" value="ECO:0007669"/>
    <property type="project" value="UniProtKB-EC"/>
</dbReference>
<dbReference type="GO" id="GO:0006400">
    <property type="term" value="P:tRNA modification"/>
    <property type="evidence" value="ECO:0007669"/>
    <property type="project" value="UniProtKB-UniRule"/>
</dbReference>
<dbReference type="CDD" id="cd01992">
    <property type="entry name" value="TilS_N"/>
    <property type="match status" value="1"/>
</dbReference>
<dbReference type="Gene3D" id="3.40.50.620">
    <property type="entry name" value="HUPs"/>
    <property type="match status" value="1"/>
</dbReference>
<dbReference type="HAMAP" id="MF_01161">
    <property type="entry name" value="tRNA_Ile_lys_synt"/>
    <property type="match status" value="1"/>
</dbReference>
<dbReference type="InterPro" id="IPR014729">
    <property type="entry name" value="Rossmann-like_a/b/a_fold"/>
</dbReference>
<dbReference type="InterPro" id="IPR011063">
    <property type="entry name" value="TilS/TtcA_N"/>
</dbReference>
<dbReference type="InterPro" id="IPR012094">
    <property type="entry name" value="tRNA_Ile_lys_synt"/>
</dbReference>
<dbReference type="InterPro" id="IPR012795">
    <property type="entry name" value="tRNA_Ile_lys_synt_N"/>
</dbReference>
<dbReference type="NCBIfam" id="TIGR02432">
    <property type="entry name" value="lysidine_TilS_N"/>
    <property type="match status" value="1"/>
</dbReference>
<dbReference type="PANTHER" id="PTHR43033">
    <property type="entry name" value="TRNA(ILE)-LYSIDINE SYNTHASE-RELATED"/>
    <property type="match status" value="1"/>
</dbReference>
<dbReference type="PANTHER" id="PTHR43033:SF1">
    <property type="entry name" value="TRNA(ILE)-LYSIDINE SYNTHASE-RELATED"/>
    <property type="match status" value="1"/>
</dbReference>
<dbReference type="Pfam" id="PF01171">
    <property type="entry name" value="ATP_bind_3"/>
    <property type="match status" value="1"/>
</dbReference>
<dbReference type="SUPFAM" id="SSF52402">
    <property type="entry name" value="Adenine nucleotide alpha hydrolases-like"/>
    <property type="match status" value="1"/>
</dbReference>
<accession>Q8YIV0</accession>